<protein>
    <recommendedName>
        <fullName evidence="1">ATP-dependent Clp protease proteolytic subunit</fullName>
        <ecNumber evidence="1">3.4.21.92</ecNumber>
    </recommendedName>
    <alternativeName>
        <fullName evidence="1">Endopeptidase Clp</fullName>
    </alternativeName>
</protein>
<accession>A9NDG0</accession>
<comment type="function">
    <text evidence="1">Cleaves peptides in various proteins in a process that requires ATP hydrolysis. Has a chymotrypsin-like activity. Plays a major role in the degradation of misfolded proteins.</text>
</comment>
<comment type="catalytic activity">
    <reaction evidence="1">
        <text>Hydrolysis of proteins to small peptides in the presence of ATP and magnesium. alpha-casein is the usual test substrate. In the absence of ATP, only oligopeptides shorter than five residues are hydrolyzed (such as succinyl-Leu-Tyr-|-NHMec, and Leu-Tyr-Leu-|-Tyr-Trp, in which cleavage of the -Tyr-|-Leu- and -Tyr-|-Trp bonds also occurs).</text>
        <dbReference type="EC" id="3.4.21.92"/>
    </reaction>
</comment>
<comment type="subunit">
    <text evidence="1">Fourteen ClpP subunits assemble into 2 heptameric rings which stack back to back to give a disk-like structure with a central cavity, resembling the structure of eukaryotic proteasomes.</text>
</comment>
<comment type="subcellular location">
    <subcellularLocation>
        <location evidence="1">Cytoplasm</location>
    </subcellularLocation>
</comment>
<comment type="similarity">
    <text evidence="1">Belongs to the peptidase S14 family.</text>
</comment>
<gene>
    <name evidence="1" type="primary">clpP</name>
    <name type="ordered locus">COXBURSA331_A1213</name>
</gene>
<name>CLPP_COXBR</name>
<organism>
    <name type="scientific">Coxiella burnetii (strain RSA 331 / Henzerling II)</name>
    <dbReference type="NCBI Taxonomy" id="360115"/>
    <lineage>
        <taxon>Bacteria</taxon>
        <taxon>Pseudomonadati</taxon>
        <taxon>Pseudomonadota</taxon>
        <taxon>Gammaproteobacteria</taxon>
        <taxon>Legionellales</taxon>
        <taxon>Coxiellaceae</taxon>
        <taxon>Coxiella</taxon>
    </lineage>
</organism>
<feature type="chain" id="PRO_1000080887" description="ATP-dependent Clp protease proteolytic subunit">
    <location>
        <begin position="1"/>
        <end position="195"/>
    </location>
</feature>
<feature type="active site" description="Nucleophile" evidence="1">
    <location>
        <position position="99"/>
    </location>
</feature>
<feature type="active site" evidence="1">
    <location>
        <position position="124"/>
    </location>
</feature>
<dbReference type="EC" id="3.4.21.92" evidence="1"/>
<dbReference type="EMBL" id="CP000890">
    <property type="protein sequence ID" value="ABX78042.1"/>
    <property type="molecule type" value="Genomic_DNA"/>
</dbReference>
<dbReference type="RefSeq" id="WP_010957769.1">
    <property type="nucleotide sequence ID" value="NC_010117.1"/>
</dbReference>
<dbReference type="SMR" id="A9NDG0"/>
<dbReference type="MEROPS" id="S14.001"/>
<dbReference type="KEGG" id="cbs:COXBURSA331_A1213"/>
<dbReference type="HOGENOM" id="CLU_058707_3_2_6"/>
<dbReference type="GO" id="GO:0005737">
    <property type="term" value="C:cytoplasm"/>
    <property type="evidence" value="ECO:0007669"/>
    <property type="project" value="UniProtKB-SubCell"/>
</dbReference>
<dbReference type="GO" id="GO:0009368">
    <property type="term" value="C:endopeptidase Clp complex"/>
    <property type="evidence" value="ECO:0007669"/>
    <property type="project" value="TreeGrafter"/>
</dbReference>
<dbReference type="GO" id="GO:0004176">
    <property type="term" value="F:ATP-dependent peptidase activity"/>
    <property type="evidence" value="ECO:0007669"/>
    <property type="project" value="InterPro"/>
</dbReference>
<dbReference type="GO" id="GO:0051117">
    <property type="term" value="F:ATPase binding"/>
    <property type="evidence" value="ECO:0007669"/>
    <property type="project" value="TreeGrafter"/>
</dbReference>
<dbReference type="GO" id="GO:0004252">
    <property type="term" value="F:serine-type endopeptidase activity"/>
    <property type="evidence" value="ECO:0007669"/>
    <property type="project" value="UniProtKB-UniRule"/>
</dbReference>
<dbReference type="GO" id="GO:0006515">
    <property type="term" value="P:protein quality control for misfolded or incompletely synthesized proteins"/>
    <property type="evidence" value="ECO:0007669"/>
    <property type="project" value="TreeGrafter"/>
</dbReference>
<dbReference type="CDD" id="cd07017">
    <property type="entry name" value="S14_ClpP_2"/>
    <property type="match status" value="1"/>
</dbReference>
<dbReference type="FunFam" id="3.90.226.10:FF:000001">
    <property type="entry name" value="ATP-dependent Clp protease proteolytic subunit"/>
    <property type="match status" value="1"/>
</dbReference>
<dbReference type="Gene3D" id="3.90.226.10">
    <property type="entry name" value="2-enoyl-CoA Hydratase, Chain A, domain 1"/>
    <property type="match status" value="1"/>
</dbReference>
<dbReference type="HAMAP" id="MF_00444">
    <property type="entry name" value="ClpP"/>
    <property type="match status" value="1"/>
</dbReference>
<dbReference type="InterPro" id="IPR001907">
    <property type="entry name" value="ClpP"/>
</dbReference>
<dbReference type="InterPro" id="IPR029045">
    <property type="entry name" value="ClpP/crotonase-like_dom_sf"/>
</dbReference>
<dbReference type="InterPro" id="IPR023562">
    <property type="entry name" value="ClpP/TepA"/>
</dbReference>
<dbReference type="InterPro" id="IPR018215">
    <property type="entry name" value="ClpP_Ser_AS"/>
</dbReference>
<dbReference type="NCBIfam" id="TIGR00493">
    <property type="entry name" value="clpP"/>
    <property type="match status" value="1"/>
</dbReference>
<dbReference type="NCBIfam" id="NF001368">
    <property type="entry name" value="PRK00277.1"/>
    <property type="match status" value="1"/>
</dbReference>
<dbReference type="NCBIfam" id="NF009205">
    <property type="entry name" value="PRK12553.1"/>
    <property type="match status" value="1"/>
</dbReference>
<dbReference type="PANTHER" id="PTHR10381">
    <property type="entry name" value="ATP-DEPENDENT CLP PROTEASE PROTEOLYTIC SUBUNIT"/>
    <property type="match status" value="1"/>
</dbReference>
<dbReference type="PANTHER" id="PTHR10381:SF70">
    <property type="entry name" value="ATP-DEPENDENT CLP PROTEASE PROTEOLYTIC SUBUNIT"/>
    <property type="match status" value="1"/>
</dbReference>
<dbReference type="Pfam" id="PF00574">
    <property type="entry name" value="CLP_protease"/>
    <property type="match status" value="1"/>
</dbReference>
<dbReference type="PRINTS" id="PR00127">
    <property type="entry name" value="CLPPROTEASEP"/>
</dbReference>
<dbReference type="SUPFAM" id="SSF52096">
    <property type="entry name" value="ClpP/crotonase"/>
    <property type="match status" value="1"/>
</dbReference>
<dbReference type="PROSITE" id="PS00381">
    <property type="entry name" value="CLP_PROTEASE_SER"/>
    <property type="match status" value="1"/>
</dbReference>
<proteinExistence type="inferred from homology"/>
<reference key="1">
    <citation type="submission" date="2007-11" db="EMBL/GenBank/DDBJ databases">
        <title>Genome sequencing of phylogenetically and phenotypically diverse Coxiella burnetii isolates.</title>
        <authorList>
            <person name="Seshadri R."/>
            <person name="Samuel J.E."/>
        </authorList>
    </citation>
    <scope>NUCLEOTIDE SEQUENCE [LARGE SCALE GENOMIC DNA]</scope>
    <source>
        <strain>RSA 331 / Henzerling II</strain>
    </source>
</reference>
<sequence>MSVLVPMVVEQTSRGERAYDIYSRLLKDRVIFLVGQVEDHMANLAIAQMLFLESENPNKDINLYINSPGGAVTSAMAIYDTMQFVKPDVRTLCIGQAASAGALLLAGGAKGKRHCLPHSSVMIHQVLGGYQGQGTDIQIHAKQTQRVSDQLNQILAKHTGKDIERVEKDTNRDYFLTPEEAVEYGLIDSIFKERP</sequence>
<evidence type="ECO:0000255" key="1">
    <source>
        <dbReference type="HAMAP-Rule" id="MF_00444"/>
    </source>
</evidence>
<keyword id="KW-0963">Cytoplasm</keyword>
<keyword id="KW-0378">Hydrolase</keyword>
<keyword id="KW-0645">Protease</keyword>
<keyword id="KW-0720">Serine protease</keyword>